<comment type="function">
    <text evidence="1">ATP-dependent 3'-5' DNA helicase/translocase; binds dsDNA rather than ssDNA, unzipping it in a translocase rather than classical helicase activity (By similarity). Component of the general transcription and DNA repair factor IIH (TFIIH) core complex. When complexed to CDK-activating kinase (CAK), involved in RNA transcription by RNA polymerase II. Also involved in transcription-coupled nucleotide excision repair (NER) of damaged DNA. In NER, TFIIH acts by opening DNA around the lesion to allow the excision of the damaged oligonucleotide and its replacement by a new DNA fragment. The ATPase activity of XPB/SSL2, but not its helicase activity, is required for DNA opening. In transcription, TFIIH has an essential role in transcription initiation. When the pre-initiation complex (PIC) has been established, TFIIH is required for promoter opening and promoter escape. The ATP-dependent helicase activity of XPB/SSL2 is required for promoter opening and promoter escape.</text>
</comment>
<comment type="catalytic activity">
    <reaction evidence="1">
        <text>Couples ATP hydrolysis with the unwinding of duplex DNA by translocating in the 3'-5' direction.</text>
        <dbReference type="EC" id="5.6.2.4"/>
    </reaction>
</comment>
<comment type="catalytic activity">
    <reaction evidence="1">
        <text>ATP + H2O = ADP + phosphate + H(+)</text>
        <dbReference type="Rhea" id="RHEA:13065"/>
        <dbReference type="ChEBI" id="CHEBI:15377"/>
        <dbReference type="ChEBI" id="CHEBI:15378"/>
        <dbReference type="ChEBI" id="CHEBI:30616"/>
        <dbReference type="ChEBI" id="CHEBI:43474"/>
        <dbReference type="ChEBI" id="CHEBI:456216"/>
        <dbReference type="EC" id="5.6.2.4"/>
    </reaction>
</comment>
<comment type="subunit">
    <text evidence="1">Component of the 7-subunit TFIIH core complex composed of XPB/SSL2, XPD/RAD3, SSL1, TFB1, TFB2, TFB4 and TFB5, which is active in NER. The core complex associates with the 3-subunit CTD-kinase module TFIIK composed of CCL1, KIN28 and TFB3 to form the 10-subunit holoenzyme (holo-TFIIH) active in transcription.</text>
</comment>
<comment type="subcellular location">
    <subcellularLocation>
        <location evidence="1">Nucleus</location>
    </subcellularLocation>
</comment>
<comment type="similarity">
    <text evidence="5">Belongs to the helicase family. RAD25/XPB subfamily.</text>
</comment>
<dbReference type="EC" id="5.6.2.4" evidence="5"/>
<dbReference type="EMBL" id="AL391737">
    <property type="protein sequence ID" value="CAD24977.2"/>
    <property type="molecule type" value="Genomic_DNA"/>
</dbReference>
<dbReference type="RefSeq" id="XP_965942.1">
    <property type="nucleotide sequence ID" value="XM_960849.1"/>
</dbReference>
<dbReference type="SMR" id="Q8SSK1"/>
<dbReference type="FunCoup" id="Q8SSK1">
    <property type="interactions" value="252"/>
</dbReference>
<dbReference type="STRING" id="284813.Q8SSK1"/>
<dbReference type="VEuPathDB" id="MicrosporidiaDB:ECU01_1060"/>
<dbReference type="HOGENOM" id="CLU_008213_0_0_1"/>
<dbReference type="InParanoid" id="Q8SSK1"/>
<dbReference type="OrthoDB" id="10262986at2759"/>
<dbReference type="Proteomes" id="UP000000819">
    <property type="component" value="Chromosome I"/>
</dbReference>
<dbReference type="GO" id="GO:0000112">
    <property type="term" value="C:nucleotide-excision repair factor 3 complex"/>
    <property type="evidence" value="ECO:0007669"/>
    <property type="project" value="TreeGrafter"/>
</dbReference>
<dbReference type="GO" id="GO:0005675">
    <property type="term" value="C:transcription factor TFIIH holo complex"/>
    <property type="evidence" value="ECO:0007669"/>
    <property type="project" value="TreeGrafter"/>
</dbReference>
<dbReference type="GO" id="GO:0097550">
    <property type="term" value="C:transcription preinitiation complex"/>
    <property type="evidence" value="ECO:0007669"/>
    <property type="project" value="TreeGrafter"/>
</dbReference>
<dbReference type="GO" id="GO:0043138">
    <property type="term" value="F:3'-5' DNA helicase activity"/>
    <property type="evidence" value="ECO:0007669"/>
    <property type="project" value="TreeGrafter"/>
</dbReference>
<dbReference type="GO" id="GO:0005524">
    <property type="term" value="F:ATP binding"/>
    <property type="evidence" value="ECO:0007669"/>
    <property type="project" value="UniProtKB-KW"/>
</dbReference>
<dbReference type="GO" id="GO:0016887">
    <property type="term" value="F:ATP hydrolysis activity"/>
    <property type="evidence" value="ECO:0007669"/>
    <property type="project" value="RHEA"/>
</dbReference>
<dbReference type="GO" id="GO:0003677">
    <property type="term" value="F:DNA binding"/>
    <property type="evidence" value="ECO:0007669"/>
    <property type="project" value="UniProtKB-KW"/>
</dbReference>
<dbReference type="GO" id="GO:0006289">
    <property type="term" value="P:nucleotide-excision repair"/>
    <property type="evidence" value="ECO:0007669"/>
    <property type="project" value="InterPro"/>
</dbReference>
<dbReference type="GO" id="GO:0006367">
    <property type="term" value="P:transcription initiation at RNA polymerase II promoter"/>
    <property type="evidence" value="ECO:0007669"/>
    <property type="project" value="InterPro"/>
</dbReference>
<dbReference type="CDD" id="cd18029">
    <property type="entry name" value="DEXHc_XPB"/>
    <property type="match status" value="1"/>
</dbReference>
<dbReference type="CDD" id="cd18789">
    <property type="entry name" value="SF2_C_XPB"/>
    <property type="match status" value="1"/>
</dbReference>
<dbReference type="FunFam" id="3.40.50.300:FF:000077">
    <property type="entry name" value="Probable DNA repair helicase RAD25"/>
    <property type="match status" value="1"/>
</dbReference>
<dbReference type="FunFam" id="3.40.50.300:FF:000117">
    <property type="entry name" value="Putative DNA repair helicase rad25"/>
    <property type="match status" value="1"/>
</dbReference>
<dbReference type="Gene3D" id="3.40.50.300">
    <property type="entry name" value="P-loop containing nucleotide triphosphate hydrolases"/>
    <property type="match status" value="2"/>
</dbReference>
<dbReference type="InterPro" id="IPR050615">
    <property type="entry name" value="ATP-dep_DNA_Helicase"/>
</dbReference>
<dbReference type="InterPro" id="IPR032438">
    <property type="entry name" value="ERCC3_RAD25_C"/>
</dbReference>
<dbReference type="InterPro" id="IPR006935">
    <property type="entry name" value="Helicase/UvrB_N"/>
</dbReference>
<dbReference type="InterPro" id="IPR014001">
    <property type="entry name" value="Helicase_ATP-bd"/>
</dbReference>
<dbReference type="InterPro" id="IPR001650">
    <property type="entry name" value="Helicase_C-like"/>
</dbReference>
<dbReference type="InterPro" id="IPR027417">
    <property type="entry name" value="P-loop_NTPase"/>
</dbReference>
<dbReference type="InterPro" id="IPR001161">
    <property type="entry name" value="XPB/Ssl2"/>
</dbReference>
<dbReference type="InterPro" id="IPR032830">
    <property type="entry name" value="XPB/Ssl2_N"/>
</dbReference>
<dbReference type="NCBIfam" id="TIGR00603">
    <property type="entry name" value="rad25"/>
    <property type="match status" value="1"/>
</dbReference>
<dbReference type="PANTHER" id="PTHR11274:SF0">
    <property type="entry name" value="GENERAL TRANSCRIPTION AND DNA REPAIR FACTOR IIH HELICASE SUBUNIT XPB"/>
    <property type="match status" value="1"/>
</dbReference>
<dbReference type="PANTHER" id="PTHR11274">
    <property type="entry name" value="RAD25/XP-B DNA REPAIR HELICASE"/>
    <property type="match status" value="1"/>
</dbReference>
<dbReference type="Pfam" id="PF16203">
    <property type="entry name" value="ERCC3_RAD25_C"/>
    <property type="match status" value="1"/>
</dbReference>
<dbReference type="Pfam" id="PF13625">
    <property type="entry name" value="Helicase_C_3"/>
    <property type="match status" value="1"/>
</dbReference>
<dbReference type="Pfam" id="PF04851">
    <property type="entry name" value="ResIII"/>
    <property type="match status" value="1"/>
</dbReference>
<dbReference type="PRINTS" id="PR00851">
    <property type="entry name" value="XRODRMPGMNTB"/>
</dbReference>
<dbReference type="SMART" id="SM00487">
    <property type="entry name" value="DEXDc"/>
    <property type="match status" value="1"/>
</dbReference>
<dbReference type="SMART" id="SM00490">
    <property type="entry name" value="HELICc"/>
    <property type="match status" value="1"/>
</dbReference>
<dbReference type="SUPFAM" id="SSF52540">
    <property type="entry name" value="P-loop containing nucleoside triphosphate hydrolases"/>
    <property type="match status" value="2"/>
</dbReference>
<dbReference type="PROSITE" id="PS51192">
    <property type="entry name" value="HELICASE_ATP_BIND_1"/>
    <property type="match status" value="1"/>
</dbReference>
<dbReference type="PROSITE" id="PS51194">
    <property type="entry name" value="HELICASE_CTER"/>
    <property type="match status" value="1"/>
</dbReference>
<organism>
    <name type="scientific">Encephalitozoon cuniculi (strain GB-M1)</name>
    <name type="common">Microsporidian parasite</name>
    <dbReference type="NCBI Taxonomy" id="284813"/>
    <lineage>
        <taxon>Eukaryota</taxon>
        <taxon>Fungi</taxon>
        <taxon>Fungi incertae sedis</taxon>
        <taxon>Microsporidia</taxon>
        <taxon>Unikaryonidae</taxon>
        <taxon>Encephalitozoon</taxon>
    </lineage>
</organism>
<reference key="1">
    <citation type="journal article" date="2001" name="Genome Res.">
        <title>Sequence and analysis of chromosome I of the amitochondriate intracellular parasite Encephalitozoon cuniculi (Microspora).</title>
        <authorList>
            <person name="Peyret P."/>
            <person name="Katinka M.D."/>
            <person name="Duprat S."/>
            <person name="Duffieux F."/>
            <person name="Barbe V."/>
            <person name="Barbazanges M."/>
            <person name="Weissenbach J."/>
            <person name="Saurin W."/>
            <person name="Vivares C.P."/>
        </authorList>
    </citation>
    <scope>NUCLEOTIDE SEQUENCE [LARGE SCALE GENOMIC DNA]</scope>
    <source>
        <strain>GB-M1</strain>
    </source>
</reference>
<reference key="2">
    <citation type="journal article" date="2001" name="Nature">
        <title>Genome sequence and gene compaction of the eukaryote parasite Encephalitozoon cuniculi.</title>
        <authorList>
            <person name="Katinka M.D."/>
            <person name="Duprat S."/>
            <person name="Cornillot E."/>
            <person name="Metenier G."/>
            <person name="Thomarat F."/>
            <person name="Prensier G."/>
            <person name="Barbe V."/>
            <person name="Peyretaillade E."/>
            <person name="Brottier P."/>
            <person name="Wincker P."/>
            <person name="Delbac F."/>
            <person name="El Alaoui H."/>
            <person name="Peyret P."/>
            <person name="Saurin W."/>
            <person name="Gouy M."/>
            <person name="Weissenbach J."/>
            <person name="Vivares C.P."/>
        </authorList>
    </citation>
    <scope>NUCLEOTIDE SEQUENCE [LARGE SCALE GENOMIC DNA]</scope>
    <source>
        <strain>GB-M1</strain>
    </source>
</reference>
<reference key="3">
    <citation type="journal article" date="2009" name="BMC Genomics">
        <title>Identification of transcriptional signals in Encephalitozoon cuniculi widespread among Microsporidia phylum: support for accurate structural genome annotation.</title>
        <authorList>
            <person name="Peyretaillade E."/>
            <person name="Goncalves O."/>
            <person name="Terrat S."/>
            <person name="Dugat-Bony E."/>
            <person name="Wincker P."/>
            <person name="Cornman R.S."/>
            <person name="Evans J.D."/>
            <person name="Delbac F."/>
            <person name="Peyret P."/>
        </authorList>
    </citation>
    <scope>GENOME REANNOTATION</scope>
    <source>
        <strain>GB-M1</strain>
    </source>
</reference>
<evidence type="ECO:0000250" key="1">
    <source>
        <dbReference type="UniProtKB" id="Q00578"/>
    </source>
</evidence>
<evidence type="ECO:0000255" key="2">
    <source>
        <dbReference type="PROSITE-ProRule" id="PRU00541"/>
    </source>
</evidence>
<evidence type="ECO:0000255" key="3">
    <source>
        <dbReference type="PROSITE-ProRule" id="PRU00542"/>
    </source>
</evidence>
<evidence type="ECO:0000256" key="4">
    <source>
        <dbReference type="SAM" id="MobiDB-lite"/>
    </source>
</evidence>
<evidence type="ECO:0000305" key="5"/>
<gene>
    <name type="primary">SSL2</name>
    <name type="synonym">RAD25</name>
    <name type="ordered locus">ECU01_1060</name>
</gene>
<sequence length="672" mass="76626">MNEVVIPKKATKHQFPYEELVLKEDGESHPIWVNYDGLIILETFRESSRQASDFLIAIAEPMSRPLQIHEFQITAYSLYAAVSVGLTTSDIIETLDRFSKNFLPRSVRVFITECTLSYGKVKLVMKESSFFLETANESVYKMLSSDAVIRSHTIGKSKEGGGLSIEVEEVELVKKRCIEIDYPLIEEYDFRNDKVLRSLQIDLKPTTIIRSYQEICLNKMFGNGRARSGIIVLPCGSGKTIVGITAISTIKKNCLVLCTSAVSVEQWKQQTLQFTNMAPDGVGRFTSDHKEWPKDDSGIVITTYTMLAYTGKRSHEAQKIMDLIRRTEWGLLVLDEVHVVPAMMFRRVLSLVSHHCKLGLTATLVREDDKIEDLNFLIGPKLYEADWQDLSAKGHIARVSCIEVWCGMTGDFYREYLSQPTRRRRLLSIMNPTKFQVCEYLINKHESRGDKIIVFSDSVYALKAYALKLGKPFIYGPTGQTERMRILKQFQTNPVINTIFLSKVGDTSIDLPEATCLIQISSHFGSRRQEAQRLGRILRAKRRNDPDFKVYFYSLVSKDTDEMFYSSKRQQFLIDQGYTFTILTDIPEVHENEHCVYKTKGQQRELLAGVLLASEKELESEESEDSEGIVYSTTKLKSLSGGDEMAYIERKAPQGRTLAKGSKKSRKWNPRP</sequence>
<feature type="chain" id="PRO_0000388443" description="General transcription and DNA repair factor IIH helicase/translocase subunit XPB">
    <location>
        <begin position="1"/>
        <end position="672"/>
    </location>
</feature>
<feature type="domain" description="Helicase ATP-binding" evidence="2">
    <location>
        <begin position="220"/>
        <end position="382"/>
    </location>
</feature>
<feature type="domain" description="Helicase C-terminal" evidence="3">
    <location>
        <begin position="436"/>
        <end position="594"/>
    </location>
</feature>
<feature type="region of interest" description="Disordered" evidence="4">
    <location>
        <begin position="650"/>
        <end position="672"/>
    </location>
</feature>
<feature type="short sequence motif" description="DEAH box">
    <location>
        <begin position="335"/>
        <end position="338"/>
    </location>
</feature>
<feature type="compositionally biased region" description="Basic residues" evidence="4">
    <location>
        <begin position="661"/>
        <end position="672"/>
    </location>
</feature>
<feature type="binding site" evidence="2">
    <location>
        <begin position="233"/>
        <end position="240"/>
    </location>
    <ligand>
        <name>ATP</name>
        <dbReference type="ChEBI" id="CHEBI:30616"/>
    </ligand>
</feature>
<proteinExistence type="inferred from homology"/>
<keyword id="KW-0067">ATP-binding</keyword>
<keyword id="KW-0227">DNA damage</keyword>
<keyword id="KW-0234">DNA repair</keyword>
<keyword id="KW-0238">DNA-binding</keyword>
<keyword id="KW-0347">Helicase</keyword>
<keyword id="KW-0378">Hydrolase</keyword>
<keyword id="KW-0413">Isomerase</keyword>
<keyword id="KW-0547">Nucleotide-binding</keyword>
<keyword id="KW-0539">Nucleus</keyword>
<keyword id="KW-1185">Reference proteome</keyword>
<keyword id="KW-0804">Transcription</keyword>
<keyword id="KW-0805">Transcription regulation</keyword>
<protein>
    <recommendedName>
        <fullName>General transcription and DNA repair factor IIH helicase/translocase subunit XPB</fullName>
        <shortName>TFIIH subunit XPB</shortName>
        <ecNumber evidence="5">5.6.2.4</ecNumber>
    </recommendedName>
    <alternativeName>
        <fullName evidence="5">DNA 3'-5' helicase/translocase XPB</fullName>
    </alternativeName>
    <alternativeName>
        <fullName>DNA repair helicase RAD25</fullName>
    </alternativeName>
    <alternativeName>
        <fullName>RNA polymerase II transcription factor B subunit SSL2</fullName>
        <shortName>TFB subunit SSL2</shortName>
    </alternativeName>
    <alternativeName>
        <fullName>Suppressor of stem-loop mutation 2</fullName>
    </alternativeName>
</protein>
<accession>Q8SSK1</accession>
<name>RAD25_ENCCU</name>